<feature type="chain" id="PRO_0000122451" description="Guanine nucleotide-binding protein-like 3 homolog">
    <location>
        <begin position="1"/>
        <end position="581"/>
    </location>
</feature>
<feature type="domain" description="CP-type G" evidence="2">
    <location>
        <begin position="141"/>
        <end position="325"/>
    </location>
</feature>
<feature type="region of interest" description="Disordered" evidence="3">
    <location>
        <begin position="1"/>
        <end position="50"/>
    </location>
</feature>
<feature type="region of interest" description="Disordered" evidence="3">
    <location>
        <begin position="500"/>
        <end position="519"/>
    </location>
</feature>
<feature type="coiled-coil region" evidence="1">
    <location>
        <begin position="64"/>
        <end position="108"/>
    </location>
</feature>
<feature type="compositionally biased region" description="Basic residues" evidence="3">
    <location>
        <begin position="1"/>
        <end position="49"/>
    </location>
</feature>
<feature type="compositionally biased region" description="Basic and acidic residues" evidence="3">
    <location>
        <begin position="500"/>
        <end position="517"/>
    </location>
</feature>
<feature type="binding site" evidence="1">
    <location>
        <begin position="189"/>
        <end position="192"/>
    </location>
    <ligand>
        <name>GTP</name>
        <dbReference type="ChEBI" id="CHEBI:37565"/>
    </ligand>
</feature>
<feature type="binding site" evidence="1">
    <location>
        <begin position="274"/>
        <end position="281"/>
    </location>
    <ligand>
        <name>GTP</name>
        <dbReference type="ChEBI" id="CHEBI:37565"/>
    </ligand>
</feature>
<feature type="binding site" evidence="1">
    <location>
        <begin position="318"/>
        <end position="321"/>
    </location>
    <ligand>
        <name>GTP</name>
        <dbReference type="ChEBI" id="CHEBI:37565"/>
    </ligand>
</feature>
<feature type="modified residue" description="Phosphoserine" evidence="4">
    <location>
        <position position="99"/>
    </location>
</feature>
<feature type="sequence conflict" description="In Ref. 3; AAM49824." evidence="6" ref="3">
    <original>F</original>
    <variation>I</variation>
    <location>
        <position position="94"/>
    </location>
</feature>
<sequence length="581" mass="65985">MALKRLKTKKSKRLTGRLKHKIEKKVRDHNKKERRAAKKNPKKGSKKQKLIQIPNICPFKDDILKEVEEAKQRQEAERLARREAFKAEREQNKFKTLESMVEDADMRSTVHGIMHENDAQDQDEKKYKNAVTKEQSLKQYFKEFRKVIENADVVLEVVDARDPLGTRCNEVERAVRGAPGNKRLVLVLNKADLVPRENLNNWIKYFRRSGPVTAFKASTQDQANRLGRRKLREMKTEKAMQGSVCIGAELLMSMLGNYCRNKGIKTSIRVGVVGIPNVGKSSIINSLTRGRSCMVGSTPGVTKSMQEVELDSKIKLIDCPGIVFTSGGENSHAVLKNAQRVGDVKDPFTIAESVLKRASKEYFCTMYDITNYDTFEEFFAKKAARMGKFLKKGVPDVVAAARSVLNDWNTGKIKYCTQPPEVQEGQSVHISASIVHSEAREFDVENFESMETEILEHCAVKTDDIMEITSTGPLEIRQPREEAEPADKITASLVIDEKEKPAKGRKRKLDEEKEKVDPSLLLEENQSLNKGIKQMQKLKKKQNVRNEKKISKITDVLDSFSLGPSSSKAEKYDFDEDYVIE</sequence>
<accession>Q8MT06</accession>
<accession>A4V308</accession>
<accession>B6IDZ0</accession>
<accession>Q9VEN7</accession>
<protein>
    <recommendedName>
        <fullName>Guanine nucleotide-binding protein-like 3 homolog</fullName>
    </recommendedName>
    <alternativeName>
        <fullName>Nucleostemin 1</fullName>
    </alternativeName>
    <alternativeName>
        <fullName>Nucleostemin homolog</fullName>
    </alternativeName>
</protein>
<proteinExistence type="evidence at protein level"/>
<evidence type="ECO:0000255" key="1"/>
<evidence type="ECO:0000255" key="2">
    <source>
        <dbReference type="PROSITE-ProRule" id="PRU01058"/>
    </source>
</evidence>
<evidence type="ECO:0000256" key="3">
    <source>
        <dbReference type="SAM" id="MobiDB-lite"/>
    </source>
</evidence>
<evidence type="ECO:0000269" key="4">
    <source>
    </source>
</evidence>
<evidence type="ECO:0000269" key="5">
    <source>
    </source>
</evidence>
<evidence type="ECO:0000305" key="6"/>
<dbReference type="EMBL" id="AE014297">
    <property type="protein sequence ID" value="AAF55384.3"/>
    <property type="molecule type" value="Genomic_DNA"/>
</dbReference>
<dbReference type="EMBL" id="AY118455">
    <property type="protein sequence ID" value="AAM49824.1"/>
    <property type="molecule type" value="mRNA"/>
</dbReference>
<dbReference type="EMBL" id="BT050580">
    <property type="protein sequence ID" value="ACJ23464.1"/>
    <property type="molecule type" value="mRNA"/>
</dbReference>
<dbReference type="RefSeq" id="NP_732199.2">
    <property type="nucleotide sequence ID" value="NM_169742.3"/>
</dbReference>
<dbReference type="SMR" id="Q8MT06"/>
<dbReference type="BioGRID" id="67100">
    <property type="interactions" value="18"/>
</dbReference>
<dbReference type="FunCoup" id="Q8MT06">
    <property type="interactions" value="1816"/>
</dbReference>
<dbReference type="IntAct" id="Q8MT06">
    <property type="interactions" value="15"/>
</dbReference>
<dbReference type="STRING" id="7227.FBpp0082867"/>
<dbReference type="GlyGen" id="Q8MT06">
    <property type="glycosylation" value="1 site"/>
</dbReference>
<dbReference type="iPTMnet" id="Q8MT06"/>
<dbReference type="PaxDb" id="7227-FBpp0082867"/>
<dbReference type="DNASU" id="42060"/>
<dbReference type="EnsemblMetazoa" id="FBtr0083426">
    <property type="protein sequence ID" value="FBpp0082867"/>
    <property type="gene ID" value="FBgn0038473"/>
</dbReference>
<dbReference type="GeneID" id="42060"/>
<dbReference type="KEGG" id="dme:Dmel_CG3983"/>
<dbReference type="UCSC" id="CG3983-RA">
    <property type="organism name" value="d. melanogaster"/>
</dbReference>
<dbReference type="AGR" id="FB:FBgn0038473"/>
<dbReference type="CTD" id="42060"/>
<dbReference type="FlyBase" id="FBgn0038473">
    <property type="gene designation" value="Ns1"/>
</dbReference>
<dbReference type="VEuPathDB" id="VectorBase:FBgn0038473"/>
<dbReference type="eggNOG" id="KOG2484">
    <property type="taxonomic scope" value="Eukaryota"/>
</dbReference>
<dbReference type="GeneTree" id="ENSGT00940000166920"/>
<dbReference type="HOGENOM" id="CLU_011106_5_3_1"/>
<dbReference type="InParanoid" id="Q8MT06"/>
<dbReference type="OMA" id="NWIKYFR"/>
<dbReference type="OrthoDB" id="444945at2759"/>
<dbReference type="PhylomeDB" id="Q8MT06"/>
<dbReference type="Reactome" id="R-DME-6791226">
    <property type="pathway name" value="Major pathway of rRNA processing in the nucleolus and cytosol"/>
</dbReference>
<dbReference type="BioGRID-ORCS" id="42060">
    <property type="hits" value="0 hits in 3 CRISPR screens"/>
</dbReference>
<dbReference type="CD-CODE" id="34A76419">
    <property type="entry name" value="Nucleolus"/>
</dbReference>
<dbReference type="GenomeRNAi" id="42060"/>
<dbReference type="PRO" id="PR:Q8MT06"/>
<dbReference type="Proteomes" id="UP000000803">
    <property type="component" value="Chromosome 3R"/>
</dbReference>
<dbReference type="Bgee" id="FBgn0038473">
    <property type="expression patterns" value="Expressed in adult abdomen and 108 other cell types or tissues"/>
</dbReference>
<dbReference type="GO" id="GO:0001652">
    <property type="term" value="C:granular component"/>
    <property type="evidence" value="ECO:0000314"/>
    <property type="project" value="FlyBase"/>
</dbReference>
<dbReference type="GO" id="GO:0005730">
    <property type="term" value="C:nucleolus"/>
    <property type="evidence" value="ECO:0000314"/>
    <property type="project" value="UniProtKB"/>
</dbReference>
<dbReference type="GO" id="GO:0016887">
    <property type="term" value="F:ATP hydrolysis activity"/>
    <property type="evidence" value="ECO:0000314"/>
    <property type="project" value="FlyBase"/>
</dbReference>
<dbReference type="GO" id="GO:0005525">
    <property type="term" value="F:GTP binding"/>
    <property type="evidence" value="ECO:0000250"/>
    <property type="project" value="UniProtKB"/>
</dbReference>
<dbReference type="GO" id="GO:0003924">
    <property type="term" value="F:GTPase activity"/>
    <property type="evidence" value="ECO:0000314"/>
    <property type="project" value="FlyBase"/>
</dbReference>
<dbReference type="GO" id="GO:0042127">
    <property type="term" value="P:regulation of cell population proliferation"/>
    <property type="evidence" value="ECO:0000315"/>
    <property type="project" value="UniProtKB"/>
</dbReference>
<dbReference type="GO" id="GO:0040014">
    <property type="term" value="P:regulation of multicellular organism growth"/>
    <property type="evidence" value="ECO:0000315"/>
    <property type="project" value="FlyBase"/>
</dbReference>
<dbReference type="GO" id="GO:0042273">
    <property type="term" value="P:ribosomal large subunit biogenesis"/>
    <property type="evidence" value="ECO:0000315"/>
    <property type="project" value="FlyBase"/>
</dbReference>
<dbReference type="CDD" id="cd04178">
    <property type="entry name" value="Nucleostemin_like"/>
    <property type="match status" value="1"/>
</dbReference>
<dbReference type="CDD" id="cd00882">
    <property type="entry name" value="Ras_like_GTPase"/>
    <property type="match status" value="1"/>
</dbReference>
<dbReference type="FunFam" id="1.10.1580.10:FF:000002">
    <property type="entry name" value="Guanine nucleotide-binding protein-like 3 (nucleolar)-like"/>
    <property type="match status" value="1"/>
</dbReference>
<dbReference type="FunFam" id="3.40.50.300:FF:000571">
    <property type="entry name" value="Guanine nucleotide-binding protein-like NSN1"/>
    <property type="match status" value="1"/>
</dbReference>
<dbReference type="Gene3D" id="1.10.1580.10">
    <property type="match status" value="1"/>
</dbReference>
<dbReference type="Gene3D" id="3.40.50.300">
    <property type="entry name" value="P-loop containing nucleotide triphosphate hydrolases"/>
    <property type="match status" value="1"/>
</dbReference>
<dbReference type="InterPro" id="IPR030378">
    <property type="entry name" value="G_CP_dom"/>
</dbReference>
<dbReference type="InterPro" id="IPR014813">
    <property type="entry name" value="Gnl3_N_dom"/>
</dbReference>
<dbReference type="InterPro" id="IPR006073">
    <property type="entry name" value="GTP-bd"/>
</dbReference>
<dbReference type="InterPro" id="IPR023179">
    <property type="entry name" value="GTP-bd_ortho_bundle_sf"/>
</dbReference>
<dbReference type="InterPro" id="IPR027417">
    <property type="entry name" value="P-loop_NTPase"/>
</dbReference>
<dbReference type="InterPro" id="IPR050755">
    <property type="entry name" value="TRAFAC_YlqF/YawG_RiboMat"/>
</dbReference>
<dbReference type="PANTHER" id="PTHR11089">
    <property type="entry name" value="GTP-BINDING PROTEIN-RELATED"/>
    <property type="match status" value="1"/>
</dbReference>
<dbReference type="PANTHER" id="PTHR11089:SF30">
    <property type="entry name" value="GUANINE NUCLEOTIDE-BINDING PROTEIN-LIKE 3 HOMOLOG"/>
    <property type="match status" value="1"/>
</dbReference>
<dbReference type="Pfam" id="PF08701">
    <property type="entry name" value="GN3L_Grn1"/>
    <property type="match status" value="1"/>
</dbReference>
<dbReference type="Pfam" id="PF01926">
    <property type="entry name" value="MMR_HSR1"/>
    <property type="match status" value="1"/>
</dbReference>
<dbReference type="PRINTS" id="PR00326">
    <property type="entry name" value="GTP1OBG"/>
</dbReference>
<dbReference type="SUPFAM" id="SSF52540">
    <property type="entry name" value="P-loop containing nucleoside triphosphate hydrolases"/>
    <property type="match status" value="1"/>
</dbReference>
<dbReference type="PROSITE" id="PS51721">
    <property type="entry name" value="G_CP"/>
    <property type="match status" value="1"/>
</dbReference>
<gene>
    <name type="primary">Ns1</name>
    <name type="ORF">CG3983</name>
</gene>
<reference key="1">
    <citation type="journal article" date="2000" name="Science">
        <title>The genome sequence of Drosophila melanogaster.</title>
        <authorList>
            <person name="Adams M.D."/>
            <person name="Celniker S.E."/>
            <person name="Holt R.A."/>
            <person name="Evans C.A."/>
            <person name="Gocayne J.D."/>
            <person name="Amanatides P.G."/>
            <person name="Scherer S.E."/>
            <person name="Li P.W."/>
            <person name="Hoskins R.A."/>
            <person name="Galle R.F."/>
            <person name="George R.A."/>
            <person name="Lewis S.E."/>
            <person name="Richards S."/>
            <person name="Ashburner M."/>
            <person name="Henderson S.N."/>
            <person name="Sutton G.G."/>
            <person name="Wortman J.R."/>
            <person name="Yandell M.D."/>
            <person name="Zhang Q."/>
            <person name="Chen L.X."/>
            <person name="Brandon R.C."/>
            <person name="Rogers Y.-H.C."/>
            <person name="Blazej R.G."/>
            <person name="Champe M."/>
            <person name="Pfeiffer B.D."/>
            <person name="Wan K.H."/>
            <person name="Doyle C."/>
            <person name="Baxter E.G."/>
            <person name="Helt G."/>
            <person name="Nelson C.R."/>
            <person name="Miklos G.L.G."/>
            <person name="Abril J.F."/>
            <person name="Agbayani A."/>
            <person name="An H.-J."/>
            <person name="Andrews-Pfannkoch C."/>
            <person name="Baldwin D."/>
            <person name="Ballew R.M."/>
            <person name="Basu A."/>
            <person name="Baxendale J."/>
            <person name="Bayraktaroglu L."/>
            <person name="Beasley E.M."/>
            <person name="Beeson K.Y."/>
            <person name="Benos P.V."/>
            <person name="Berman B.P."/>
            <person name="Bhandari D."/>
            <person name="Bolshakov S."/>
            <person name="Borkova D."/>
            <person name="Botchan M.R."/>
            <person name="Bouck J."/>
            <person name="Brokstein P."/>
            <person name="Brottier P."/>
            <person name="Burtis K.C."/>
            <person name="Busam D.A."/>
            <person name="Butler H."/>
            <person name="Cadieu E."/>
            <person name="Center A."/>
            <person name="Chandra I."/>
            <person name="Cherry J.M."/>
            <person name="Cawley S."/>
            <person name="Dahlke C."/>
            <person name="Davenport L.B."/>
            <person name="Davies P."/>
            <person name="de Pablos B."/>
            <person name="Delcher A."/>
            <person name="Deng Z."/>
            <person name="Mays A.D."/>
            <person name="Dew I."/>
            <person name="Dietz S.M."/>
            <person name="Dodson K."/>
            <person name="Doup L.E."/>
            <person name="Downes M."/>
            <person name="Dugan-Rocha S."/>
            <person name="Dunkov B.C."/>
            <person name="Dunn P."/>
            <person name="Durbin K.J."/>
            <person name="Evangelista C.C."/>
            <person name="Ferraz C."/>
            <person name="Ferriera S."/>
            <person name="Fleischmann W."/>
            <person name="Fosler C."/>
            <person name="Gabrielian A.E."/>
            <person name="Garg N.S."/>
            <person name="Gelbart W.M."/>
            <person name="Glasser K."/>
            <person name="Glodek A."/>
            <person name="Gong F."/>
            <person name="Gorrell J.H."/>
            <person name="Gu Z."/>
            <person name="Guan P."/>
            <person name="Harris M."/>
            <person name="Harris N.L."/>
            <person name="Harvey D.A."/>
            <person name="Heiman T.J."/>
            <person name="Hernandez J.R."/>
            <person name="Houck J."/>
            <person name="Hostin D."/>
            <person name="Houston K.A."/>
            <person name="Howland T.J."/>
            <person name="Wei M.-H."/>
            <person name="Ibegwam C."/>
            <person name="Jalali M."/>
            <person name="Kalush F."/>
            <person name="Karpen G.H."/>
            <person name="Ke Z."/>
            <person name="Kennison J.A."/>
            <person name="Ketchum K.A."/>
            <person name="Kimmel B.E."/>
            <person name="Kodira C.D."/>
            <person name="Kraft C.L."/>
            <person name="Kravitz S."/>
            <person name="Kulp D."/>
            <person name="Lai Z."/>
            <person name="Lasko P."/>
            <person name="Lei Y."/>
            <person name="Levitsky A.A."/>
            <person name="Li J.H."/>
            <person name="Li Z."/>
            <person name="Liang Y."/>
            <person name="Lin X."/>
            <person name="Liu X."/>
            <person name="Mattei B."/>
            <person name="McIntosh T.C."/>
            <person name="McLeod M.P."/>
            <person name="McPherson D."/>
            <person name="Merkulov G."/>
            <person name="Milshina N.V."/>
            <person name="Mobarry C."/>
            <person name="Morris J."/>
            <person name="Moshrefi A."/>
            <person name="Mount S.M."/>
            <person name="Moy M."/>
            <person name="Murphy B."/>
            <person name="Murphy L."/>
            <person name="Muzny D.M."/>
            <person name="Nelson D.L."/>
            <person name="Nelson D.R."/>
            <person name="Nelson K.A."/>
            <person name="Nixon K."/>
            <person name="Nusskern D.R."/>
            <person name="Pacleb J.M."/>
            <person name="Palazzolo M."/>
            <person name="Pittman G.S."/>
            <person name="Pan S."/>
            <person name="Pollard J."/>
            <person name="Puri V."/>
            <person name="Reese M.G."/>
            <person name="Reinert K."/>
            <person name="Remington K."/>
            <person name="Saunders R.D.C."/>
            <person name="Scheeler F."/>
            <person name="Shen H."/>
            <person name="Shue B.C."/>
            <person name="Siden-Kiamos I."/>
            <person name="Simpson M."/>
            <person name="Skupski M.P."/>
            <person name="Smith T.J."/>
            <person name="Spier E."/>
            <person name="Spradling A.C."/>
            <person name="Stapleton M."/>
            <person name="Strong R."/>
            <person name="Sun E."/>
            <person name="Svirskas R."/>
            <person name="Tector C."/>
            <person name="Turner R."/>
            <person name="Venter E."/>
            <person name="Wang A.H."/>
            <person name="Wang X."/>
            <person name="Wang Z.-Y."/>
            <person name="Wassarman D.A."/>
            <person name="Weinstock G.M."/>
            <person name="Weissenbach J."/>
            <person name="Williams S.M."/>
            <person name="Woodage T."/>
            <person name="Worley K.C."/>
            <person name="Wu D."/>
            <person name="Yang S."/>
            <person name="Yao Q.A."/>
            <person name="Ye J."/>
            <person name="Yeh R.-F."/>
            <person name="Zaveri J.S."/>
            <person name="Zhan M."/>
            <person name="Zhang G."/>
            <person name="Zhao Q."/>
            <person name="Zheng L."/>
            <person name="Zheng X.H."/>
            <person name="Zhong F.N."/>
            <person name="Zhong W."/>
            <person name="Zhou X."/>
            <person name="Zhu S.C."/>
            <person name="Zhu X."/>
            <person name="Smith H.O."/>
            <person name="Gibbs R.A."/>
            <person name="Myers E.W."/>
            <person name="Rubin G.M."/>
            <person name="Venter J.C."/>
        </authorList>
    </citation>
    <scope>NUCLEOTIDE SEQUENCE [LARGE SCALE GENOMIC DNA]</scope>
    <source>
        <strain>Berkeley</strain>
    </source>
</reference>
<reference key="2">
    <citation type="journal article" date="2002" name="Genome Biol.">
        <title>Annotation of the Drosophila melanogaster euchromatic genome: a systematic review.</title>
        <authorList>
            <person name="Misra S."/>
            <person name="Crosby M.A."/>
            <person name="Mungall C.J."/>
            <person name="Matthews B.B."/>
            <person name="Campbell K.S."/>
            <person name="Hradecky P."/>
            <person name="Huang Y."/>
            <person name="Kaminker J.S."/>
            <person name="Millburn G.H."/>
            <person name="Prochnik S.E."/>
            <person name="Smith C.D."/>
            <person name="Tupy J.L."/>
            <person name="Whitfield E.J."/>
            <person name="Bayraktaroglu L."/>
            <person name="Berman B.P."/>
            <person name="Bettencourt B.R."/>
            <person name="Celniker S.E."/>
            <person name="de Grey A.D.N.J."/>
            <person name="Drysdale R.A."/>
            <person name="Harris N.L."/>
            <person name="Richter J."/>
            <person name="Russo S."/>
            <person name="Schroeder A.J."/>
            <person name="Shu S.Q."/>
            <person name="Stapleton M."/>
            <person name="Yamada C."/>
            <person name="Ashburner M."/>
            <person name="Gelbart W.M."/>
            <person name="Rubin G.M."/>
            <person name="Lewis S.E."/>
        </authorList>
    </citation>
    <scope>GENOME REANNOTATION</scope>
    <source>
        <strain>Berkeley</strain>
    </source>
</reference>
<reference key="3">
    <citation type="journal article" date="2002" name="Genome Biol.">
        <title>A Drosophila full-length cDNA resource.</title>
        <authorList>
            <person name="Stapleton M."/>
            <person name="Carlson J.W."/>
            <person name="Brokstein P."/>
            <person name="Yu C."/>
            <person name="Champe M."/>
            <person name="George R.A."/>
            <person name="Guarin H."/>
            <person name="Kronmiller B."/>
            <person name="Pacleb J.M."/>
            <person name="Park S."/>
            <person name="Wan K.H."/>
            <person name="Rubin G.M."/>
            <person name="Celniker S.E."/>
        </authorList>
    </citation>
    <scope>NUCLEOTIDE SEQUENCE [LARGE SCALE MRNA]</scope>
    <source>
        <strain>Berkeley</strain>
        <tissue>Testis</tissue>
    </source>
</reference>
<reference key="4">
    <citation type="submission" date="2008-11" db="EMBL/GenBank/DDBJ databases">
        <authorList>
            <person name="Carlson J."/>
            <person name="Booth B."/>
            <person name="Frise E."/>
            <person name="Park S."/>
            <person name="Wan K."/>
            <person name="Yu C."/>
            <person name="Celniker S."/>
        </authorList>
    </citation>
    <scope>NUCLEOTIDE SEQUENCE [LARGE SCALE MRNA]</scope>
    <source>
        <strain>Berkeley</strain>
    </source>
</reference>
<reference key="5">
    <citation type="journal article" date="2007" name="Mol. Biosyst.">
        <title>An integrated chemical, mass spectrometric and computational strategy for (quantitative) phosphoproteomics: application to Drosophila melanogaster Kc167 cells.</title>
        <authorList>
            <person name="Bodenmiller B."/>
            <person name="Mueller L.N."/>
            <person name="Pedrioli P.G.A."/>
            <person name="Pflieger D."/>
            <person name="Juenger M.A."/>
            <person name="Eng J.K."/>
            <person name="Aebersold R."/>
            <person name="Tao W.A."/>
        </authorList>
    </citation>
    <scope>PHOSPHORYLATION [LARGE SCALE ANALYSIS] AT SER-99</scope>
    <scope>IDENTIFICATION BY MASS SPECTROMETRY</scope>
</reference>
<reference key="6">
    <citation type="journal article" date="2008" name="Genes Dev.">
        <title>A nucleostemin family GTPase, NS3, acts in serotonergic neurons to regulate insulin signaling and control body size.</title>
        <authorList>
            <person name="Kaplan D.D."/>
            <person name="Zimmermann G."/>
            <person name="Suyama K."/>
            <person name="Meyer T."/>
            <person name="Scott M.P."/>
        </authorList>
    </citation>
    <scope>FUNCTION</scope>
    <scope>SUBCELLULAR LOCATION</scope>
    <scope>DISRUPTION PHENOTYPE</scope>
</reference>
<organism>
    <name type="scientific">Drosophila melanogaster</name>
    <name type="common">Fruit fly</name>
    <dbReference type="NCBI Taxonomy" id="7227"/>
    <lineage>
        <taxon>Eukaryota</taxon>
        <taxon>Metazoa</taxon>
        <taxon>Ecdysozoa</taxon>
        <taxon>Arthropoda</taxon>
        <taxon>Hexapoda</taxon>
        <taxon>Insecta</taxon>
        <taxon>Pterygota</taxon>
        <taxon>Neoptera</taxon>
        <taxon>Endopterygota</taxon>
        <taxon>Diptera</taxon>
        <taxon>Brachycera</taxon>
        <taxon>Muscomorpha</taxon>
        <taxon>Ephydroidea</taxon>
        <taxon>Drosophilidae</taxon>
        <taxon>Drosophila</taxon>
        <taxon>Sophophora</taxon>
    </lineage>
</organism>
<keyword id="KW-0175">Coiled coil</keyword>
<keyword id="KW-0342">GTP-binding</keyword>
<keyword id="KW-0547">Nucleotide-binding</keyword>
<keyword id="KW-0539">Nucleus</keyword>
<keyword id="KW-0597">Phosphoprotein</keyword>
<keyword id="KW-1185">Reference proteome</keyword>
<name>GNL3_DROME</name>
<comment type="function">
    <text evidence="5">May play a role in regulating cellular proliferation.</text>
</comment>
<comment type="subcellular location">
    <subcellularLocation>
        <location evidence="5">Nucleus</location>
        <location evidence="5">Nucleolus</location>
    </subcellularLocation>
</comment>
<comment type="domain">
    <text>In contrast to other GTP-binding proteins, this family is characterized by a circular permutation of the GTPase motifs described by a G4-G1-G3 pattern.</text>
</comment>
<comment type="disruption phenotype">
    <text evidence="5">Impaired embryonic development resulting in a profoundly reduced rate of larval hatching.</text>
</comment>
<comment type="similarity">
    <text evidence="2">Belongs to the TRAFAC class YlqF/YawG GTPase family.</text>
</comment>